<protein>
    <recommendedName>
        <fullName evidence="1">Large ribosomal subunit protein bL35</fullName>
    </recommendedName>
    <alternativeName>
        <fullName evidence="2">50S ribosomal protein L35</fullName>
    </alternativeName>
</protein>
<comment type="similarity">
    <text evidence="1">Belongs to the bacterial ribosomal protein bL35 family.</text>
</comment>
<reference key="1">
    <citation type="journal article" date="2008" name="J. Bacteriol.">
        <title>Comparative genome analysis of 'Candidatus Phytoplasma australiense' (subgroup tuf-Australia I; rp-A) and 'Ca. Phytoplasma asteris' strains OY-M and AY-WB.</title>
        <authorList>
            <person name="Tran-Nguyen L.T."/>
            <person name="Kube M."/>
            <person name="Schneider B."/>
            <person name="Reinhardt R."/>
            <person name="Gibb K.S."/>
        </authorList>
    </citation>
    <scope>NUCLEOTIDE SEQUENCE [LARGE SCALE GENOMIC DNA]</scope>
</reference>
<proteinExistence type="inferred from homology"/>
<dbReference type="EMBL" id="AM422018">
    <property type="protein sequence ID" value="CAM11431.1"/>
    <property type="molecule type" value="Genomic_DNA"/>
</dbReference>
<dbReference type="SMR" id="B1V8Z9"/>
<dbReference type="STRING" id="59748.PA0096"/>
<dbReference type="KEGG" id="pal:PA0096"/>
<dbReference type="eggNOG" id="COG0291">
    <property type="taxonomic scope" value="Bacteria"/>
</dbReference>
<dbReference type="Proteomes" id="UP000008323">
    <property type="component" value="Chromosome"/>
</dbReference>
<dbReference type="GO" id="GO:0022625">
    <property type="term" value="C:cytosolic large ribosomal subunit"/>
    <property type="evidence" value="ECO:0007669"/>
    <property type="project" value="TreeGrafter"/>
</dbReference>
<dbReference type="GO" id="GO:0003735">
    <property type="term" value="F:structural constituent of ribosome"/>
    <property type="evidence" value="ECO:0007669"/>
    <property type="project" value="InterPro"/>
</dbReference>
<dbReference type="GO" id="GO:0006412">
    <property type="term" value="P:translation"/>
    <property type="evidence" value="ECO:0007669"/>
    <property type="project" value="UniProtKB-UniRule"/>
</dbReference>
<dbReference type="FunFam" id="4.10.410.60:FF:000001">
    <property type="entry name" value="50S ribosomal protein L35"/>
    <property type="match status" value="1"/>
</dbReference>
<dbReference type="Gene3D" id="4.10.410.60">
    <property type="match status" value="1"/>
</dbReference>
<dbReference type="HAMAP" id="MF_00514">
    <property type="entry name" value="Ribosomal_bL35"/>
    <property type="match status" value="1"/>
</dbReference>
<dbReference type="InterPro" id="IPR001706">
    <property type="entry name" value="Ribosomal_bL35"/>
</dbReference>
<dbReference type="InterPro" id="IPR021137">
    <property type="entry name" value="Ribosomal_bL35-like"/>
</dbReference>
<dbReference type="InterPro" id="IPR018265">
    <property type="entry name" value="Ribosomal_bL35_CS"/>
</dbReference>
<dbReference type="InterPro" id="IPR037229">
    <property type="entry name" value="Ribosomal_bL35_sf"/>
</dbReference>
<dbReference type="NCBIfam" id="TIGR00001">
    <property type="entry name" value="rpmI_bact"/>
    <property type="match status" value="1"/>
</dbReference>
<dbReference type="PANTHER" id="PTHR33343">
    <property type="entry name" value="54S RIBOSOMAL PROTEIN BL35M"/>
    <property type="match status" value="1"/>
</dbReference>
<dbReference type="PANTHER" id="PTHR33343:SF1">
    <property type="entry name" value="LARGE RIBOSOMAL SUBUNIT PROTEIN BL35M"/>
    <property type="match status" value="1"/>
</dbReference>
<dbReference type="Pfam" id="PF01632">
    <property type="entry name" value="Ribosomal_L35p"/>
    <property type="match status" value="1"/>
</dbReference>
<dbReference type="PRINTS" id="PR00064">
    <property type="entry name" value="RIBOSOMALL35"/>
</dbReference>
<dbReference type="SUPFAM" id="SSF143034">
    <property type="entry name" value="L35p-like"/>
    <property type="match status" value="1"/>
</dbReference>
<dbReference type="PROSITE" id="PS00936">
    <property type="entry name" value="RIBOSOMAL_L35"/>
    <property type="match status" value="1"/>
</dbReference>
<accession>B1V8Z9</accession>
<feature type="chain" id="PRO_1000127388" description="Large ribosomal subunit protein bL35">
    <location>
        <begin position="1"/>
        <end position="65"/>
    </location>
</feature>
<evidence type="ECO:0000255" key="1">
    <source>
        <dbReference type="HAMAP-Rule" id="MF_00514"/>
    </source>
</evidence>
<evidence type="ECO:0000305" key="2"/>
<organism>
    <name type="scientific">Phytoplasma australiense</name>
    <dbReference type="NCBI Taxonomy" id="59748"/>
    <lineage>
        <taxon>Bacteria</taxon>
        <taxon>Bacillati</taxon>
        <taxon>Mycoplasmatota</taxon>
        <taxon>Mollicutes</taxon>
        <taxon>Acholeplasmatales</taxon>
        <taxon>Acholeplasmataceae</taxon>
        <taxon>Candidatus Phytoplasma</taxon>
        <taxon>16SrXII (Stolbur group)</taxon>
    </lineage>
</organism>
<gene>
    <name evidence="1" type="primary">rpmI</name>
    <name type="ordered locus">PA0096</name>
</gene>
<name>RL35_PHYAS</name>
<keyword id="KW-1185">Reference proteome</keyword>
<keyword id="KW-0687">Ribonucleoprotein</keyword>
<keyword id="KW-0689">Ribosomal protein</keyword>
<sequence length="65" mass="7551">MIKKKSHSGLKKRIKITKKKKLLRGHAYKNHLAASKTTKQNRQLRGVVCVDHSDYKRIKTLIRGL</sequence>